<reference key="1">
    <citation type="journal article" date="2002" name="Proc. Natl. Acad. Sci. U.S.A.">
        <title>Genome sequence of the hyperthermophilic crenarchaeon Pyrobaculum aerophilum.</title>
        <authorList>
            <person name="Fitz-Gibbon S.T."/>
            <person name="Ladner H."/>
            <person name="Kim U.-J."/>
            <person name="Stetter K.O."/>
            <person name="Simon M.I."/>
            <person name="Miller J.H."/>
        </authorList>
    </citation>
    <scope>NUCLEOTIDE SEQUENCE [LARGE SCALE GENOMIC DNA]</scope>
    <source>
        <strain>ATCC 51768 / DSM 7523 / JCM 9630 / CIP 104966 / NBRC 100827 / IM2</strain>
    </source>
</reference>
<dbReference type="EC" id="2.7.7.6" evidence="1"/>
<dbReference type="EMBL" id="AE009441">
    <property type="protein sequence ID" value="AAL63856.1"/>
    <property type="molecule type" value="Genomic_DNA"/>
</dbReference>
<dbReference type="SMR" id="Q8ZW46"/>
<dbReference type="STRING" id="178306.PAE1978"/>
<dbReference type="EnsemblBacteria" id="AAL63856">
    <property type="protein sequence ID" value="AAL63856"/>
    <property type="gene ID" value="PAE1978"/>
</dbReference>
<dbReference type="KEGG" id="pai:PAE1978"/>
<dbReference type="PATRIC" id="fig|178306.9.peg.1460"/>
<dbReference type="eggNOG" id="arCOG04111">
    <property type="taxonomic scope" value="Archaea"/>
</dbReference>
<dbReference type="HOGENOM" id="CLU_090381_5_3_2"/>
<dbReference type="InParanoid" id="Q8ZW46"/>
<dbReference type="Proteomes" id="UP000002439">
    <property type="component" value="Chromosome"/>
</dbReference>
<dbReference type="GO" id="GO:0005737">
    <property type="term" value="C:cytoplasm"/>
    <property type="evidence" value="ECO:0007669"/>
    <property type="project" value="UniProtKB-SubCell"/>
</dbReference>
<dbReference type="GO" id="GO:0000428">
    <property type="term" value="C:DNA-directed RNA polymerase complex"/>
    <property type="evidence" value="ECO:0007669"/>
    <property type="project" value="UniProtKB-KW"/>
</dbReference>
<dbReference type="GO" id="GO:0003677">
    <property type="term" value="F:DNA binding"/>
    <property type="evidence" value="ECO:0007669"/>
    <property type="project" value="InterPro"/>
</dbReference>
<dbReference type="GO" id="GO:0003899">
    <property type="term" value="F:DNA-directed RNA polymerase activity"/>
    <property type="evidence" value="ECO:0007669"/>
    <property type="project" value="UniProtKB-UniRule"/>
</dbReference>
<dbReference type="GO" id="GO:0046983">
    <property type="term" value="F:protein dimerization activity"/>
    <property type="evidence" value="ECO:0007669"/>
    <property type="project" value="InterPro"/>
</dbReference>
<dbReference type="GO" id="GO:0006351">
    <property type="term" value="P:DNA-templated transcription"/>
    <property type="evidence" value="ECO:0007669"/>
    <property type="project" value="UniProtKB-UniRule"/>
</dbReference>
<dbReference type="CDD" id="cd06927">
    <property type="entry name" value="RNAP_L"/>
    <property type="match status" value="1"/>
</dbReference>
<dbReference type="Gene3D" id="3.30.1360.10">
    <property type="entry name" value="RNA polymerase, RBP11-like subunit"/>
    <property type="match status" value="1"/>
</dbReference>
<dbReference type="HAMAP" id="MF_00261">
    <property type="entry name" value="RNApol_arch_Rpo11"/>
    <property type="match status" value="1"/>
</dbReference>
<dbReference type="InterPro" id="IPR036603">
    <property type="entry name" value="RBP11-like"/>
</dbReference>
<dbReference type="InterPro" id="IPR009025">
    <property type="entry name" value="RBP11-like_dimer"/>
</dbReference>
<dbReference type="InterPro" id="IPR008193">
    <property type="entry name" value="RNA_pol_Rpb11_13-16kDa_CS"/>
</dbReference>
<dbReference type="InterPro" id="IPR022905">
    <property type="entry name" value="Rpo11-like"/>
</dbReference>
<dbReference type="Pfam" id="PF13656">
    <property type="entry name" value="RNA_pol_L_2"/>
    <property type="match status" value="1"/>
</dbReference>
<dbReference type="SUPFAM" id="SSF55257">
    <property type="entry name" value="RBP11-like subunits of RNA polymerase"/>
    <property type="match status" value="1"/>
</dbReference>
<dbReference type="PROSITE" id="PS01154">
    <property type="entry name" value="RNA_POL_L_13KD"/>
    <property type="match status" value="1"/>
</dbReference>
<accession>Q8ZW46</accession>
<organism>
    <name type="scientific">Pyrobaculum aerophilum (strain ATCC 51768 / DSM 7523 / JCM 9630 / CIP 104966 / NBRC 100827 / IM2)</name>
    <dbReference type="NCBI Taxonomy" id="178306"/>
    <lineage>
        <taxon>Archaea</taxon>
        <taxon>Thermoproteota</taxon>
        <taxon>Thermoprotei</taxon>
        <taxon>Thermoproteales</taxon>
        <taxon>Thermoproteaceae</taxon>
        <taxon>Pyrobaculum</taxon>
    </lineage>
</organism>
<feature type="chain" id="PRO_0000149334" description="DNA-directed RNA polymerase subunit Rpo11">
    <location>
        <begin position="1"/>
        <end position="92"/>
    </location>
</feature>
<sequence length="92" mass="10678">MSPVLRLEILKLDDKYLELKAKGETYTLFSPLVEYLSNDPDVEYVQFDVDHPLQENAYFKLKVKRGNPLEAIQRAVNAILSDLEELERGFFS</sequence>
<proteinExistence type="inferred from homology"/>
<keyword id="KW-0963">Cytoplasm</keyword>
<keyword id="KW-0240">DNA-directed RNA polymerase</keyword>
<keyword id="KW-0548">Nucleotidyltransferase</keyword>
<keyword id="KW-1185">Reference proteome</keyword>
<keyword id="KW-0804">Transcription</keyword>
<keyword id="KW-0808">Transferase</keyword>
<gene>
    <name evidence="1" type="primary">rpo11</name>
    <name evidence="1" type="synonym">rpoL</name>
    <name type="ordered locus">PAE1978</name>
</gene>
<comment type="function">
    <text evidence="1">DNA-dependent RNA polymerase (RNAP) catalyzes the transcription of DNA into RNA using the four ribonucleoside triphosphates as substrates.</text>
</comment>
<comment type="catalytic activity">
    <reaction evidence="1">
        <text>RNA(n) + a ribonucleoside 5'-triphosphate = RNA(n+1) + diphosphate</text>
        <dbReference type="Rhea" id="RHEA:21248"/>
        <dbReference type="Rhea" id="RHEA-COMP:14527"/>
        <dbReference type="Rhea" id="RHEA-COMP:17342"/>
        <dbReference type="ChEBI" id="CHEBI:33019"/>
        <dbReference type="ChEBI" id="CHEBI:61557"/>
        <dbReference type="ChEBI" id="CHEBI:140395"/>
        <dbReference type="EC" id="2.7.7.6"/>
    </reaction>
</comment>
<comment type="subunit">
    <text evidence="1">Part of the RNA polymerase complex.</text>
</comment>
<comment type="subcellular location">
    <subcellularLocation>
        <location evidence="1">Cytoplasm</location>
    </subcellularLocation>
</comment>
<comment type="similarity">
    <text evidence="1">Belongs to the archaeal Rpo11/eukaryotic RPB11/RPC19 RNA polymerase subunit family.</text>
</comment>
<evidence type="ECO:0000255" key="1">
    <source>
        <dbReference type="HAMAP-Rule" id="MF_00261"/>
    </source>
</evidence>
<name>RPO11_PYRAE</name>
<protein>
    <recommendedName>
        <fullName evidence="1">DNA-directed RNA polymerase subunit Rpo11</fullName>
        <ecNumber evidence="1">2.7.7.6</ecNumber>
    </recommendedName>
    <alternativeName>
        <fullName evidence="1">DNA-directed RNA polymerase subunit L</fullName>
    </alternativeName>
</protein>